<accession>B4RX41</accession>
<accession>F2GD87</accession>
<dbReference type="EC" id="5.3.1.9" evidence="1"/>
<dbReference type="EMBL" id="CP001103">
    <property type="protein sequence ID" value="AEA99223.1"/>
    <property type="molecule type" value="Genomic_DNA"/>
</dbReference>
<dbReference type="RefSeq" id="WP_012519515.1">
    <property type="nucleotide sequence ID" value="NC_011138.3"/>
</dbReference>
<dbReference type="SMR" id="B4RX41"/>
<dbReference type="KEGG" id="amc:MADE_1015455"/>
<dbReference type="HOGENOM" id="CLU_017947_3_1_6"/>
<dbReference type="UniPathway" id="UPA00109">
    <property type="reaction ID" value="UER00181"/>
</dbReference>
<dbReference type="UniPathway" id="UPA00138"/>
<dbReference type="Proteomes" id="UP000001870">
    <property type="component" value="Chromosome"/>
</dbReference>
<dbReference type="GO" id="GO:0005829">
    <property type="term" value="C:cytosol"/>
    <property type="evidence" value="ECO:0007669"/>
    <property type="project" value="TreeGrafter"/>
</dbReference>
<dbReference type="GO" id="GO:0097367">
    <property type="term" value="F:carbohydrate derivative binding"/>
    <property type="evidence" value="ECO:0007669"/>
    <property type="project" value="InterPro"/>
</dbReference>
<dbReference type="GO" id="GO:0004347">
    <property type="term" value="F:glucose-6-phosphate isomerase activity"/>
    <property type="evidence" value="ECO:0007669"/>
    <property type="project" value="UniProtKB-UniRule"/>
</dbReference>
<dbReference type="GO" id="GO:0048029">
    <property type="term" value="F:monosaccharide binding"/>
    <property type="evidence" value="ECO:0007669"/>
    <property type="project" value="TreeGrafter"/>
</dbReference>
<dbReference type="GO" id="GO:0006094">
    <property type="term" value="P:gluconeogenesis"/>
    <property type="evidence" value="ECO:0007669"/>
    <property type="project" value="UniProtKB-UniRule"/>
</dbReference>
<dbReference type="GO" id="GO:0051156">
    <property type="term" value="P:glucose 6-phosphate metabolic process"/>
    <property type="evidence" value="ECO:0007669"/>
    <property type="project" value="TreeGrafter"/>
</dbReference>
<dbReference type="GO" id="GO:0006096">
    <property type="term" value="P:glycolytic process"/>
    <property type="evidence" value="ECO:0007669"/>
    <property type="project" value="UniProtKB-UniRule"/>
</dbReference>
<dbReference type="CDD" id="cd05015">
    <property type="entry name" value="SIS_PGI_1"/>
    <property type="match status" value="1"/>
</dbReference>
<dbReference type="CDD" id="cd05016">
    <property type="entry name" value="SIS_PGI_2"/>
    <property type="match status" value="1"/>
</dbReference>
<dbReference type="FunFam" id="3.40.50.10490:FF:000018">
    <property type="entry name" value="Glucose-6-phosphate isomerase"/>
    <property type="match status" value="1"/>
</dbReference>
<dbReference type="Gene3D" id="1.10.1390.10">
    <property type="match status" value="1"/>
</dbReference>
<dbReference type="Gene3D" id="3.40.50.10490">
    <property type="entry name" value="Glucose-6-phosphate isomerase like protein, domain 1"/>
    <property type="match status" value="2"/>
</dbReference>
<dbReference type="HAMAP" id="MF_00473">
    <property type="entry name" value="G6P_isomerase"/>
    <property type="match status" value="1"/>
</dbReference>
<dbReference type="InterPro" id="IPR001672">
    <property type="entry name" value="G6P_Isomerase"/>
</dbReference>
<dbReference type="InterPro" id="IPR023096">
    <property type="entry name" value="G6P_Isomerase_C"/>
</dbReference>
<dbReference type="InterPro" id="IPR018189">
    <property type="entry name" value="Phosphoglucose_isomerase_CS"/>
</dbReference>
<dbReference type="InterPro" id="IPR046348">
    <property type="entry name" value="SIS_dom_sf"/>
</dbReference>
<dbReference type="InterPro" id="IPR035476">
    <property type="entry name" value="SIS_PGI_1"/>
</dbReference>
<dbReference type="InterPro" id="IPR035482">
    <property type="entry name" value="SIS_PGI_2"/>
</dbReference>
<dbReference type="NCBIfam" id="NF001211">
    <property type="entry name" value="PRK00179.1"/>
    <property type="match status" value="1"/>
</dbReference>
<dbReference type="PANTHER" id="PTHR11469">
    <property type="entry name" value="GLUCOSE-6-PHOSPHATE ISOMERASE"/>
    <property type="match status" value="1"/>
</dbReference>
<dbReference type="PANTHER" id="PTHR11469:SF1">
    <property type="entry name" value="GLUCOSE-6-PHOSPHATE ISOMERASE"/>
    <property type="match status" value="1"/>
</dbReference>
<dbReference type="Pfam" id="PF00342">
    <property type="entry name" value="PGI"/>
    <property type="match status" value="1"/>
</dbReference>
<dbReference type="PRINTS" id="PR00662">
    <property type="entry name" value="G6PISOMERASE"/>
</dbReference>
<dbReference type="SUPFAM" id="SSF53697">
    <property type="entry name" value="SIS domain"/>
    <property type="match status" value="1"/>
</dbReference>
<dbReference type="PROSITE" id="PS00765">
    <property type="entry name" value="P_GLUCOSE_ISOMERASE_1"/>
    <property type="match status" value="1"/>
</dbReference>
<dbReference type="PROSITE" id="PS00174">
    <property type="entry name" value="P_GLUCOSE_ISOMERASE_2"/>
    <property type="match status" value="1"/>
</dbReference>
<dbReference type="PROSITE" id="PS51463">
    <property type="entry name" value="P_GLUCOSE_ISOMERASE_3"/>
    <property type="match status" value="1"/>
</dbReference>
<keyword id="KW-0963">Cytoplasm</keyword>
<keyword id="KW-0312">Gluconeogenesis</keyword>
<keyword id="KW-0324">Glycolysis</keyword>
<keyword id="KW-0413">Isomerase</keyword>
<reference key="1">
    <citation type="journal article" date="2008" name="ISME J.">
        <title>Comparative genomics of two ecotypes of the marine planktonic copiotroph Alteromonas macleodii suggests alternative lifestyles associated with different kinds of particulate organic matter.</title>
        <authorList>
            <person name="Ivars-Martinez E."/>
            <person name="Martin-Cuadrado A.-B."/>
            <person name="D'Auria G."/>
            <person name="Mira A."/>
            <person name="Ferriera S."/>
            <person name="Johnson J."/>
            <person name="Friedman R."/>
            <person name="Rodriguez-Valera F."/>
        </authorList>
    </citation>
    <scope>NUCLEOTIDE SEQUENCE [LARGE SCALE GENOMIC DNA]</scope>
    <source>
        <strain>DSM 17117 / CIP 110805 / LMG 28347 / Deep ecotype</strain>
    </source>
</reference>
<feature type="chain" id="PRO_1000125689" description="Glucose-6-phosphate isomerase">
    <location>
        <begin position="1"/>
        <end position="549"/>
    </location>
</feature>
<feature type="active site" description="Proton donor" evidence="1">
    <location>
        <position position="353"/>
    </location>
</feature>
<feature type="active site" evidence="1">
    <location>
        <position position="384"/>
    </location>
</feature>
<feature type="active site" evidence="1">
    <location>
        <position position="512"/>
    </location>
</feature>
<organism>
    <name type="scientific">Alteromonas mediterranea (strain DSM 17117 / CIP 110805 / LMG 28347 / Deep ecotype)</name>
    <dbReference type="NCBI Taxonomy" id="1774373"/>
    <lineage>
        <taxon>Bacteria</taxon>
        <taxon>Pseudomonadati</taxon>
        <taxon>Pseudomonadota</taxon>
        <taxon>Gammaproteobacteria</taxon>
        <taxon>Alteromonadales</taxon>
        <taxon>Alteromonadaceae</taxon>
        <taxon>Alteromonas/Salinimonas group</taxon>
        <taxon>Alteromonas</taxon>
    </lineage>
</organism>
<comment type="function">
    <text evidence="1">Catalyzes the reversible isomerization of glucose-6-phosphate to fructose-6-phosphate.</text>
</comment>
<comment type="catalytic activity">
    <reaction evidence="1">
        <text>alpha-D-glucose 6-phosphate = beta-D-fructose 6-phosphate</text>
        <dbReference type="Rhea" id="RHEA:11816"/>
        <dbReference type="ChEBI" id="CHEBI:57634"/>
        <dbReference type="ChEBI" id="CHEBI:58225"/>
        <dbReference type="EC" id="5.3.1.9"/>
    </reaction>
</comment>
<comment type="pathway">
    <text evidence="1">Carbohydrate biosynthesis; gluconeogenesis.</text>
</comment>
<comment type="pathway">
    <text evidence="1">Carbohydrate degradation; glycolysis; D-glyceraldehyde 3-phosphate and glycerone phosphate from D-glucose: step 2/4.</text>
</comment>
<comment type="subcellular location">
    <subcellularLocation>
        <location evidence="1">Cytoplasm</location>
    </subcellularLocation>
</comment>
<comment type="similarity">
    <text evidence="1">Belongs to the GPI family.</text>
</comment>
<proteinExistence type="inferred from homology"/>
<name>G6PI_ALTMD</name>
<protein>
    <recommendedName>
        <fullName evidence="1">Glucose-6-phosphate isomerase</fullName>
        <shortName evidence="1">GPI</shortName>
        <ecNumber evidence="1">5.3.1.9</ecNumber>
    </recommendedName>
    <alternativeName>
        <fullName evidence="1">Phosphoglucose isomerase</fullName>
        <shortName evidence="1">PGI</shortName>
    </alternativeName>
    <alternativeName>
        <fullName evidence="1">Phosphohexose isomerase</fullName>
        <shortName evidence="1">PHI</shortName>
    </alternativeName>
</protein>
<gene>
    <name evidence="1" type="primary">pgi</name>
    <name type="ordered locus">MADE_1015455</name>
</gene>
<sequence length="549" mass="60519">MSVLTSLPEWKNLSDIAASVKSAHMRDWFAQDTSRADKMQLEACGIFLDYSKNRVNEDALKGLFDLARACKLETLRDAMFSGEQINSTEGRAVLHTALRNFSDRKVLVDGEDVMPEVHATLEKIEAFTASIHSGEHKGYTGKPIKHIVAIGIGGSFLGPKIMTEALKPHTVDAVKVHFVANVDGCHIHDVLSSIDFEETLVVMSSKSFSTQETLQNTLTAKDWFLKSGGTQEDIAKHFVAVSSNVKAATDFGISADNIFPMWDWVGGRYSLWSAIGLPISLALGFENFKGLLEGAFEMDNHFTTAPLEENMPVLLGLLGIWYRNFFDAQSHVLLPYYHYLRGLPAYVQQLDMESNGKEVTQEGESVDYPTGPIIWGSEGTNGQHSFHQLIHQGSGVIPADFMLPLNVPNQDDTHHAMLASNCFGQTQALMQGKSFEECYADLDGKGLDDAERKRLAAHKTMPGNKPSNTFLFDSLTPQTLGALVAMYEHKVFVQGVIWNLNSFDQWGVELGKVLGNQVLAGIQGEADKDNFDASTQQLIAKFRAANAPK</sequence>
<evidence type="ECO:0000255" key="1">
    <source>
        <dbReference type="HAMAP-Rule" id="MF_00473"/>
    </source>
</evidence>